<keyword id="KW-0113">Calvin cycle</keyword>
<keyword id="KW-0120">Carbon dioxide fixation</keyword>
<keyword id="KW-0456">Lyase</keyword>
<keyword id="KW-0460">Magnesium</keyword>
<keyword id="KW-0479">Metal-binding</keyword>
<keyword id="KW-0503">Monooxygenase</keyword>
<keyword id="KW-0560">Oxidoreductase</keyword>
<keyword id="KW-0602">Photosynthesis</keyword>
<keyword id="KW-1185">Reference proteome</keyword>
<name>RBL1A_BRASB</name>
<accession>A5E993</accession>
<comment type="function">
    <text evidence="1">RuBisCO catalyzes two reactions: the carboxylation of D-ribulose 1,5-bisphosphate, the primary event in carbon dioxide fixation, as well as the oxidative fragmentation of the pentose substrate. Both reactions occur simultaneously and in competition at the same active site.</text>
</comment>
<comment type="catalytic activity">
    <reaction evidence="1">
        <text>2 (2R)-3-phosphoglycerate + 2 H(+) = D-ribulose 1,5-bisphosphate + CO2 + H2O</text>
        <dbReference type="Rhea" id="RHEA:23124"/>
        <dbReference type="ChEBI" id="CHEBI:15377"/>
        <dbReference type="ChEBI" id="CHEBI:15378"/>
        <dbReference type="ChEBI" id="CHEBI:16526"/>
        <dbReference type="ChEBI" id="CHEBI:57870"/>
        <dbReference type="ChEBI" id="CHEBI:58272"/>
        <dbReference type="EC" id="4.1.1.39"/>
    </reaction>
</comment>
<comment type="catalytic activity">
    <reaction evidence="1">
        <text>D-ribulose 1,5-bisphosphate + O2 = 2-phosphoglycolate + (2R)-3-phosphoglycerate + 2 H(+)</text>
        <dbReference type="Rhea" id="RHEA:36631"/>
        <dbReference type="ChEBI" id="CHEBI:15378"/>
        <dbReference type="ChEBI" id="CHEBI:15379"/>
        <dbReference type="ChEBI" id="CHEBI:57870"/>
        <dbReference type="ChEBI" id="CHEBI:58033"/>
        <dbReference type="ChEBI" id="CHEBI:58272"/>
    </reaction>
</comment>
<comment type="cofactor">
    <cofactor evidence="1">
        <name>Mg(2+)</name>
        <dbReference type="ChEBI" id="CHEBI:18420"/>
    </cofactor>
    <text evidence="1">Binds 1 Mg(2+) ion per subunit.</text>
</comment>
<comment type="subunit">
    <text evidence="1">Heterohexadecamer of 8 large chains and 8 small chains.</text>
</comment>
<comment type="miscellaneous">
    <text evidence="1">The basic functional RuBisCO is composed of a large chain homodimer in a 'head-to-tail' conformation. In form I RuBisCO this homodimer is arranged in a barrel-like tetramer with the small subunits forming a tetrameric 'cap' on each end of the 'barrel'.</text>
</comment>
<comment type="similarity">
    <text evidence="1">Belongs to the RuBisCO large chain family. Type I subfamily.</text>
</comment>
<evidence type="ECO:0000255" key="1">
    <source>
        <dbReference type="HAMAP-Rule" id="MF_01338"/>
    </source>
</evidence>
<organism>
    <name type="scientific">Bradyrhizobium sp. (strain BTAi1 / ATCC BAA-1182)</name>
    <dbReference type="NCBI Taxonomy" id="288000"/>
    <lineage>
        <taxon>Bacteria</taxon>
        <taxon>Pseudomonadati</taxon>
        <taxon>Pseudomonadota</taxon>
        <taxon>Alphaproteobacteria</taxon>
        <taxon>Hyphomicrobiales</taxon>
        <taxon>Nitrobacteraceae</taxon>
        <taxon>Bradyrhizobium</taxon>
    </lineage>
</organism>
<protein>
    <recommendedName>
        <fullName evidence="1">Ribulose bisphosphate carboxylase large chain 1</fullName>
        <shortName evidence="1">RuBisCO large subunit 1</shortName>
        <ecNumber evidence="1">4.1.1.39</ecNumber>
    </recommendedName>
</protein>
<feature type="chain" id="PRO_0000299958" description="Ribulose bisphosphate carboxylase large chain 1">
    <location>
        <begin position="1"/>
        <end position="488"/>
    </location>
</feature>
<feature type="active site" description="Proton acceptor" evidence="1">
    <location>
        <position position="179"/>
    </location>
</feature>
<feature type="active site" description="Proton acceptor" evidence="1">
    <location>
        <position position="297"/>
    </location>
</feature>
<feature type="binding site" description="in homodimeric partner" evidence="1">
    <location>
        <position position="127"/>
    </location>
    <ligand>
        <name>substrate</name>
    </ligand>
</feature>
<feature type="binding site" evidence="1">
    <location>
        <position position="177"/>
    </location>
    <ligand>
        <name>substrate</name>
    </ligand>
</feature>
<feature type="binding site" evidence="1">
    <location>
        <position position="181"/>
    </location>
    <ligand>
        <name>substrate</name>
    </ligand>
</feature>
<feature type="binding site" description="via carbamate group" evidence="1">
    <location>
        <position position="205"/>
    </location>
    <ligand>
        <name>Mg(2+)</name>
        <dbReference type="ChEBI" id="CHEBI:18420"/>
    </ligand>
</feature>
<feature type="binding site" evidence="1">
    <location>
        <position position="207"/>
    </location>
    <ligand>
        <name>Mg(2+)</name>
        <dbReference type="ChEBI" id="CHEBI:18420"/>
    </ligand>
</feature>
<feature type="binding site" evidence="1">
    <location>
        <position position="208"/>
    </location>
    <ligand>
        <name>Mg(2+)</name>
        <dbReference type="ChEBI" id="CHEBI:18420"/>
    </ligand>
</feature>
<feature type="binding site" evidence="1">
    <location>
        <position position="298"/>
    </location>
    <ligand>
        <name>substrate</name>
    </ligand>
</feature>
<feature type="binding site" evidence="1">
    <location>
        <position position="330"/>
    </location>
    <ligand>
        <name>substrate</name>
    </ligand>
</feature>
<feature type="binding site" evidence="1">
    <location>
        <position position="382"/>
    </location>
    <ligand>
        <name>substrate</name>
    </ligand>
</feature>
<feature type="site" description="Transition state stabilizer" evidence="1">
    <location>
        <position position="337"/>
    </location>
</feature>
<feature type="modified residue" description="N6-carboxylysine" evidence="1">
    <location>
        <position position="205"/>
    </location>
</feature>
<sequence>MNEALKSLTVTGKERYKSGVLEYKRMGYWEPDYEPKDTDVIALFRVTPQNGVDPIEASAAVAGESSTATWTVVWTDRLTAAEKYRAKCYRVDPVPNTPGSYFAYIAYDLDLFEPGSIANLSASIIGNVFGFKPLKALRLEDMRFPVAYVKTFQGPATGIVVERERLDKFGRPLLGATVKPKLGLSGRNYGRVVYEALKGGLDFTKDDENTNSQPFMHWRDRFLYCMEAVNKAQAATGEVKGTYLNVTAATMEDMYERAEFAKELGSVIIMIDLVIGYTAIQSMAKWARRNDMILHLHRAGHGTYTRQKSHGVSFRVIAKWMRLAGVDHIHAGTVVGKLEGDPNTTRGYYDICREDHNPMALEYGLFFEQHWASLNKLMPVASGGIHAGQMHQLLNYLGEDVVLQFGGGTIGHPLGIQAGATANRVALEAMILARNEGRDYVHEGPEILAKAAATCTPLKQALDVWKNVTFNYDSTDTPDFVPTAAVTA</sequence>
<dbReference type="EC" id="4.1.1.39" evidence="1"/>
<dbReference type="EMBL" id="CP000494">
    <property type="protein sequence ID" value="ABQ32737.1"/>
    <property type="molecule type" value="Genomic_DNA"/>
</dbReference>
<dbReference type="RefSeq" id="WP_012040789.1">
    <property type="nucleotide sequence ID" value="NC_009485.1"/>
</dbReference>
<dbReference type="SMR" id="A5E993"/>
<dbReference type="STRING" id="288000.BBta_0451"/>
<dbReference type="KEGG" id="bbt:BBta_0451"/>
<dbReference type="eggNOG" id="COG1850">
    <property type="taxonomic scope" value="Bacteria"/>
</dbReference>
<dbReference type="HOGENOM" id="CLU_031450_2_0_5"/>
<dbReference type="OrthoDB" id="9764279at2"/>
<dbReference type="Proteomes" id="UP000000246">
    <property type="component" value="Chromosome"/>
</dbReference>
<dbReference type="GO" id="GO:0000287">
    <property type="term" value="F:magnesium ion binding"/>
    <property type="evidence" value="ECO:0007669"/>
    <property type="project" value="UniProtKB-UniRule"/>
</dbReference>
<dbReference type="GO" id="GO:0004497">
    <property type="term" value="F:monooxygenase activity"/>
    <property type="evidence" value="ECO:0007669"/>
    <property type="project" value="UniProtKB-KW"/>
</dbReference>
<dbReference type="GO" id="GO:0016984">
    <property type="term" value="F:ribulose-bisphosphate carboxylase activity"/>
    <property type="evidence" value="ECO:0007669"/>
    <property type="project" value="UniProtKB-UniRule"/>
</dbReference>
<dbReference type="GO" id="GO:0019253">
    <property type="term" value="P:reductive pentose-phosphate cycle"/>
    <property type="evidence" value="ECO:0007669"/>
    <property type="project" value="UniProtKB-UniRule"/>
</dbReference>
<dbReference type="CDD" id="cd08212">
    <property type="entry name" value="RuBisCO_large_I"/>
    <property type="match status" value="1"/>
</dbReference>
<dbReference type="Gene3D" id="3.20.20.110">
    <property type="entry name" value="Ribulose bisphosphate carboxylase, large subunit, C-terminal domain"/>
    <property type="match status" value="1"/>
</dbReference>
<dbReference type="Gene3D" id="3.30.70.150">
    <property type="entry name" value="RuBisCO large subunit, N-terminal domain"/>
    <property type="match status" value="1"/>
</dbReference>
<dbReference type="HAMAP" id="MF_01338">
    <property type="entry name" value="RuBisCO_L_type1"/>
    <property type="match status" value="1"/>
</dbReference>
<dbReference type="InterPro" id="IPR033966">
    <property type="entry name" value="RuBisCO"/>
</dbReference>
<dbReference type="InterPro" id="IPR020878">
    <property type="entry name" value="RuBisCo_large_chain_AS"/>
</dbReference>
<dbReference type="InterPro" id="IPR000685">
    <property type="entry name" value="RuBisCO_lsu_C"/>
</dbReference>
<dbReference type="InterPro" id="IPR036376">
    <property type="entry name" value="RuBisCO_lsu_C_sf"/>
</dbReference>
<dbReference type="InterPro" id="IPR017443">
    <property type="entry name" value="RuBisCO_lsu_fd_N"/>
</dbReference>
<dbReference type="InterPro" id="IPR036422">
    <property type="entry name" value="RuBisCO_lsu_N_sf"/>
</dbReference>
<dbReference type="InterPro" id="IPR020888">
    <property type="entry name" value="RuBisCO_lsuI"/>
</dbReference>
<dbReference type="NCBIfam" id="NF003252">
    <property type="entry name" value="PRK04208.1"/>
    <property type="match status" value="1"/>
</dbReference>
<dbReference type="PANTHER" id="PTHR42704">
    <property type="entry name" value="RIBULOSE BISPHOSPHATE CARBOXYLASE"/>
    <property type="match status" value="1"/>
</dbReference>
<dbReference type="PANTHER" id="PTHR42704:SF17">
    <property type="entry name" value="RIBULOSE BISPHOSPHATE CARBOXYLASE LARGE CHAIN"/>
    <property type="match status" value="1"/>
</dbReference>
<dbReference type="Pfam" id="PF00016">
    <property type="entry name" value="RuBisCO_large"/>
    <property type="match status" value="1"/>
</dbReference>
<dbReference type="Pfam" id="PF02788">
    <property type="entry name" value="RuBisCO_large_N"/>
    <property type="match status" value="1"/>
</dbReference>
<dbReference type="SFLD" id="SFLDG01052">
    <property type="entry name" value="RuBisCO"/>
    <property type="match status" value="1"/>
</dbReference>
<dbReference type="SFLD" id="SFLDS00014">
    <property type="entry name" value="RuBisCO"/>
    <property type="match status" value="1"/>
</dbReference>
<dbReference type="SFLD" id="SFLDG00301">
    <property type="entry name" value="RuBisCO-like_proteins"/>
    <property type="match status" value="1"/>
</dbReference>
<dbReference type="SUPFAM" id="SSF51649">
    <property type="entry name" value="RuBisCo, C-terminal domain"/>
    <property type="match status" value="1"/>
</dbReference>
<dbReference type="SUPFAM" id="SSF54966">
    <property type="entry name" value="RuBisCO, large subunit, small (N-terminal) domain"/>
    <property type="match status" value="1"/>
</dbReference>
<dbReference type="PROSITE" id="PS00157">
    <property type="entry name" value="RUBISCO_LARGE"/>
    <property type="match status" value="1"/>
</dbReference>
<reference key="1">
    <citation type="journal article" date="2007" name="Science">
        <title>Legumes symbioses: absence of nod genes in photosynthetic bradyrhizobia.</title>
        <authorList>
            <person name="Giraud E."/>
            <person name="Moulin L."/>
            <person name="Vallenet D."/>
            <person name="Barbe V."/>
            <person name="Cytryn E."/>
            <person name="Avarre J.-C."/>
            <person name="Jaubert M."/>
            <person name="Simon D."/>
            <person name="Cartieaux F."/>
            <person name="Prin Y."/>
            <person name="Bena G."/>
            <person name="Hannibal L."/>
            <person name="Fardoux J."/>
            <person name="Kojadinovic M."/>
            <person name="Vuillet L."/>
            <person name="Lajus A."/>
            <person name="Cruveiller S."/>
            <person name="Rouy Z."/>
            <person name="Mangenot S."/>
            <person name="Segurens B."/>
            <person name="Dossat C."/>
            <person name="Franck W.L."/>
            <person name="Chang W.-S."/>
            <person name="Saunders E."/>
            <person name="Bruce D."/>
            <person name="Richardson P."/>
            <person name="Normand P."/>
            <person name="Dreyfus B."/>
            <person name="Pignol D."/>
            <person name="Stacey G."/>
            <person name="Emerich D."/>
            <person name="Vermeglio A."/>
            <person name="Medigue C."/>
            <person name="Sadowsky M."/>
        </authorList>
    </citation>
    <scope>NUCLEOTIDE SEQUENCE [LARGE SCALE GENOMIC DNA]</scope>
    <source>
        <strain>BTAi1 / ATCC BAA-1182</strain>
    </source>
</reference>
<gene>
    <name evidence="1" type="primary">cbbL1</name>
    <name type="ordered locus">BBta_0451</name>
</gene>
<proteinExistence type="inferred from homology"/>